<gene>
    <name evidence="1" type="primary">osgepl1</name>
</gene>
<name>OSGL1_XENTR</name>
<proteinExistence type="evidence at transcript level"/>
<comment type="function">
    <text evidence="1">Required for the formation of a threonylcarbamoyl group on adenosine at position 37 (t(6)A37) in mitochondrial tRNAs that read codons beginning with adenine. Probably involved in the transfer of the threonylcarbamoyl moiety of threonylcarbamoyl-AMP (TC-AMP) to the N6 group of A37. Involved in mitochondrial genome maintenance.</text>
</comment>
<comment type="catalytic activity">
    <reaction evidence="1">
        <text>L-threonylcarbamoyladenylate + adenosine(37) in tRNA = N(6)-L-threonylcarbamoyladenosine(37) in tRNA + AMP + H(+)</text>
        <dbReference type="Rhea" id="RHEA:37059"/>
        <dbReference type="Rhea" id="RHEA-COMP:10162"/>
        <dbReference type="Rhea" id="RHEA-COMP:10163"/>
        <dbReference type="ChEBI" id="CHEBI:15378"/>
        <dbReference type="ChEBI" id="CHEBI:73682"/>
        <dbReference type="ChEBI" id="CHEBI:74411"/>
        <dbReference type="ChEBI" id="CHEBI:74418"/>
        <dbReference type="ChEBI" id="CHEBI:456215"/>
        <dbReference type="EC" id="2.3.1.234"/>
    </reaction>
</comment>
<comment type="cofactor">
    <cofactor evidence="1">
        <name>a divalent metal cation</name>
        <dbReference type="ChEBI" id="CHEBI:60240"/>
    </cofactor>
    <text evidence="1">Binds 1 divalent metal cation per subunit.</text>
</comment>
<comment type="subunit">
    <text evidence="1">Monomer.</text>
</comment>
<comment type="subcellular location">
    <subcellularLocation>
        <location evidence="1">Mitochondrion</location>
    </subcellularLocation>
</comment>
<comment type="similarity">
    <text evidence="1">Belongs to the KAE1 / TsaD family.</text>
</comment>
<comment type="sequence caution" evidence="2">
    <conflict type="erroneous initiation">
        <sequence resource="EMBL-CDS" id="AAI22039"/>
    </conflict>
</comment>
<protein>
    <recommendedName>
        <fullName evidence="1">tRNA N6-adenosine threonylcarbamoyltransferase, mitochondrial</fullName>
        <ecNumber evidence="1">2.3.1.234</ecNumber>
    </recommendedName>
    <alternativeName>
        <fullName evidence="1">N6-L-threonylcarbamoyladenine synthase</fullName>
        <shortName evidence="1">t(6)A synthase</shortName>
    </alternativeName>
    <alternativeName>
        <fullName evidence="1">O-sialoglycoprotein endopeptidase-like protein 1</fullName>
    </alternativeName>
    <alternativeName>
        <fullName evidence="1">t(6)A37 threonylcarbamoyladenosine biosynthesis protein osgepl1</fullName>
    </alternativeName>
    <alternativeName>
        <fullName evidence="1">tRNA threonylcarbamoyladenosine biosynthesis protein osgepl1</fullName>
    </alternativeName>
</protein>
<feature type="transit peptide" description="Mitochondrion" evidence="1">
    <location>
        <begin position="1"/>
        <end position="19"/>
    </location>
</feature>
<feature type="chain" id="PRO_0000307782" description="tRNA N6-adenosine threonylcarbamoyltransferase, mitochondrial">
    <location>
        <begin position="20"/>
        <end position="405"/>
    </location>
</feature>
<feature type="binding site" evidence="1">
    <location>
        <position position="138"/>
    </location>
    <ligand>
        <name>a divalent metal cation</name>
        <dbReference type="ChEBI" id="CHEBI:60240"/>
    </ligand>
</feature>
<feature type="binding site" evidence="1">
    <location>
        <position position="142"/>
    </location>
    <ligand>
        <name>a divalent metal cation</name>
        <dbReference type="ChEBI" id="CHEBI:60240"/>
    </ligand>
</feature>
<feature type="binding site" evidence="1">
    <location>
        <begin position="160"/>
        <end position="164"/>
    </location>
    <ligand>
        <name>substrate</name>
    </ligand>
</feature>
<feature type="binding site" evidence="1">
    <location>
        <position position="193"/>
    </location>
    <ligand>
        <name>substrate</name>
    </ligand>
</feature>
<feature type="binding site" evidence="1">
    <location>
        <position position="213"/>
    </location>
    <ligand>
        <name>substrate</name>
    </ligand>
</feature>
<feature type="binding site" evidence="1">
    <location>
        <position position="217"/>
    </location>
    <ligand>
        <name>substrate</name>
    </ligand>
</feature>
<feature type="binding site" evidence="1">
    <location>
        <begin position="320"/>
        <end position="321"/>
    </location>
    <ligand>
        <name>substrate</name>
    </ligand>
</feature>
<feature type="binding site" evidence="1">
    <location>
        <position position="348"/>
    </location>
    <ligand>
        <name>substrate</name>
    </ligand>
</feature>
<feature type="binding site" evidence="1">
    <location>
        <position position="349"/>
    </location>
    <ligand>
        <name>a divalent metal cation</name>
        <dbReference type="ChEBI" id="CHEBI:60240"/>
    </ligand>
</feature>
<evidence type="ECO:0000255" key="1">
    <source>
        <dbReference type="HAMAP-Rule" id="MF_03179"/>
    </source>
</evidence>
<evidence type="ECO:0000305" key="2"/>
<keyword id="KW-0012">Acyltransferase</keyword>
<keyword id="KW-0479">Metal-binding</keyword>
<keyword id="KW-0496">Mitochondrion</keyword>
<keyword id="KW-1185">Reference proteome</keyword>
<keyword id="KW-0808">Transferase</keyword>
<keyword id="KW-0809">Transit peptide</keyword>
<keyword id="KW-0819">tRNA processing</keyword>
<organism>
    <name type="scientific">Xenopus tropicalis</name>
    <name type="common">Western clawed frog</name>
    <name type="synonym">Silurana tropicalis</name>
    <dbReference type="NCBI Taxonomy" id="8364"/>
    <lineage>
        <taxon>Eukaryota</taxon>
        <taxon>Metazoa</taxon>
        <taxon>Chordata</taxon>
        <taxon>Craniata</taxon>
        <taxon>Vertebrata</taxon>
        <taxon>Euteleostomi</taxon>
        <taxon>Amphibia</taxon>
        <taxon>Batrachia</taxon>
        <taxon>Anura</taxon>
        <taxon>Pipoidea</taxon>
        <taxon>Pipidae</taxon>
        <taxon>Xenopodinae</taxon>
        <taxon>Xenopus</taxon>
        <taxon>Silurana</taxon>
    </lineage>
</organism>
<sequence length="405" mass="43813">MAKYISNLSRIAVVRGRVSVSTLVKYPRIVLGIETSCDDTGAAVVDENGTILGEALHCQKDIHLKTGGIIPTVAQHLHRDNITKVVNKAIHASGISPYELSAIATTVKPGLGLCLGVGLSYSLDLVNKYHKPFIPIHHMEAHALTVRLLHPVEFPFLVLLISGGHCILAIVSGVSEFVMLGHSLDEAPGDTLDKVARRLSLINHPQCSGMSGGEAIEHLALHGNRKICKLKIPMSHHRDCNFSFAGLRNQVNKVIEQKEAEKGISKGQLLPCVADIAAAVQHTVALHLAQRTQRAIYYCKREGLIPTERACLVVSGGVASNRYIRKALQTVTHESDMTLLCPPPRLCTDNGVMIAWNGIEKLQSGVGVLHNADGACYESRASLGRDISELVRKAAIKVQPIKILS</sequence>
<accession>Q0P4K0</accession>
<dbReference type="EC" id="2.3.1.234" evidence="1"/>
<dbReference type="EMBL" id="BC122038">
    <property type="protein sequence ID" value="AAI22039.1"/>
    <property type="status" value="ALT_INIT"/>
    <property type="molecule type" value="mRNA"/>
</dbReference>
<dbReference type="RefSeq" id="NP_001153459.1">
    <property type="nucleotide sequence ID" value="NM_001159987.1"/>
</dbReference>
<dbReference type="RefSeq" id="XP_012825973.1">
    <property type="nucleotide sequence ID" value="XM_012970519.3"/>
</dbReference>
<dbReference type="RefSeq" id="XP_012825974.1">
    <property type="nucleotide sequence ID" value="XM_012970520.3"/>
</dbReference>
<dbReference type="SMR" id="Q0P4K0"/>
<dbReference type="FunCoup" id="Q0P4K0">
    <property type="interactions" value="1828"/>
</dbReference>
<dbReference type="STRING" id="8364.ENSXETP00000015762"/>
<dbReference type="PaxDb" id="8364-ENSXETP00000062148"/>
<dbReference type="GeneID" id="779499"/>
<dbReference type="KEGG" id="xtr:779499"/>
<dbReference type="AGR" id="Xenbase:XB-GENE-948324"/>
<dbReference type="CTD" id="64172"/>
<dbReference type="Xenbase" id="XB-GENE-948324">
    <property type="gene designation" value="osgepl1"/>
</dbReference>
<dbReference type="eggNOG" id="KOG2707">
    <property type="taxonomic scope" value="Eukaryota"/>
</dbReference>
<dbReference type="HOGENOM" id="CLU_023208_1_2_1"/>
<dbReference type="InParanoid" id="Q0P4K0"/>
<dbReference type="OrthoDB" id="10259622at2759"/>
<dbReference type="TreeFam" id="TF314600"/>
<dbReference type="Proteomes" id="UP000008143">
    <property type="component" value="Chromosome 9"/>
</dbReference>
<dbReference type="Bgee" id="ENSXETG00000009883">
    <property type="expression patterns" value="Expressed in egg cell and 13 other cell types or tissues"/>
</dbReference>
<dbReference type="GO" id="GO:0005739">
    <property type="term" value="C:mitochondrion"/>
    <property type="evidence" value="ECO:0000250"/>
    <property type="project" value="UniProtKB"/>
</dbReference>
<dbReference type="GO" id="GO:0046872">
    <property type="term" value="F:metal ion binding"/>
    <property type="evidence" value="ECO:0007669"/>
    <property type="project" value="UniProtKB-KW"/>
</dbReference>
<dbReference type="GO" id="GO:0061711">
    <property type="term" value="F:N(6)-L-threonylcarbamoyladenine synthase activity"/>
    <property type="evidence" value="ECO:0000250"/>
    <property type="project" value="UniProtKB"/>
</dbReference>
<dbReference type="GO" id="GO:0002949">
    <property type="term" value="P:tRNA threonylcarbamoyladenosine modification"/>
    <property type="evidence" value="ECO:0000250"/>
    <property type="project" value="UniProtKB"/>
</dbReference>
<dbReference type="CDD" id="cd24134">
    <property type="entry name" value="ASKHA_NBD_OSGEPL1_QRI7_euk"/>
    <property type="match status" value="1"/>
</dbReference>
<dbReference type="FunFam" id="3.30.420.40:FF:000106">
    <property type="entry name" value="Probable tRNA N6-adenosine threonylcarbamoyltransferase, mitochondrial"/>
    <property type="match status" value="1"/>
</dbReference>
<dbReference type="Gene3D" id="3.30.420.40">
    <property type="match status" value="2"/>
</dbReference>
<dbReference type="HAMAP" id="MF_01445">
    <property type="entry name" value="TsaD"/>
    <property type="match status" value="1"/>
</dbReference>
<dbReference type="InterPro" id="IPR043129">
    <property type="entry name" value="ATPase_NBD"/>
</dbReference>
<dbReference type="InterPro" id="IPR000905">
    <property type="entry name" value="Gcp-like_dom"/>
</dbReference>
<dbReference type="InterPro" id="IPR017861">
    <property type="entry name" value="KAE1/TsaD"/>
</dbReference>
<dbReference type="InterPro" id="IPR022450">
    <property type="entry name" value="TsaD"/>
</dbReference>
<dbReference type="NCBIfam" id="TIGR00329">
    <property type="entry name" value="gcp_kae1"/>
    <property type="match status" value="1"/>
</dbReference>
<dbReference type="PANTHER" id="PTHR11735">
    <property type="entry name" value="TRNA N6-ADENOSINE THREONYLCARBAMOYLTRANSFERASE"/>
    <property type="match status" value="1"/>
</dbReference>
<dbReference type="PANTHER" id="PTHR11735:SF6">
    <property type="entry name" value="TRNA N6-ADENOSINE THREONYLCARBAMOYLTRANSFERASE, MITOCHONDRIAL"/>
    <property type="match status" value="1"/>
</dbReference>
<dbReference type="Pfam" id="PF00814">
    <property type="entry name" value="TsaD"/>
    <property type="match status" value="1"/>
</dbReference>
<dbReference type="PRINTS" id="PR00789">
    <property type="entry name" value="OSIALOPTASE"/>
</dbReference>
<dbReference type="SUPFAM" id="SSF53067">
    <property type="entry name" value="Actin-like ATPase domain"/>
    <property type="match status" value="1"/>
</dbReference>
<reference key="1">
    <citation type="submission" date="2006-08" db="EMBL/GenBank/DDBJ databases">
        <authorList>
            <consortium name="NIH - Xenopus Gene Collection (XGC) project"/>
        </authorList>
    </citation>
    <scope>NUCLEOTIDE SEQUENCE [LARGE SCALE MRNA]</scope>
    <source>
        <strain>N6</strain>
        <tissue>Ovary</tissue>
    </source>
</reference>